<keyword id="KW-0456">Lyase</keyword>
<keyword id="KW-1185">Reference proteome</keyword>
<organism>
    <name type="scientific">Uncinocarpus reesii (strain UAMH 1704)</name>
    <dbReference type="NCBI Taxonomy" id="336963"/>
    <lineage>
        <taxon>Eukaryota</taxon>
        <taxon>Fungi</taxon>
        <taxon>Dikarya</taxon>
        <taxon>Ascomycota</taxon>
        <taxon>Pezizomycotina</taxon>
        <taxon>Eurotiomycetes</taxon>
        <taxon>Eurotiomycetidae</taxon>
        <taxon>Onygenales</taxon>
        <taxon>Onygenaceae</taxon>
        <taxon>Uncinocarpus</taxon>
    </lineage>
</organism>
<comment type="function">
    <text evidence="1">Catalyzes the reaction of cyanate with bicarbonate to produce ammonia and carbon dioxide.</text>
</comment>
<comment type="catalytic activity">
    <reaction evidence="1">
        <text>cyanate + hydrogencarbonate + 3 H(+) = NH4(+) + 2 CO2</text>
        <dbReference type="Rhea" id="RHEA:11120"/>
        <dbReference type="ChEBI" id="CHEBI:15378"/>
        <dbReference type="ChEBI" id="CHEBI:16526"/>
        <dbReference type="ChEBI" id="CHEBI:17544"/>
        <dbReference type="ChEBI" id="CHEBI:28938"/>
        <dbReference type="ChEBI" id="CHEBI:29195"/>
        <dbReference type="EC" id="4.2.1.104"/>
    </reaction>
</comment>
<comment type="similarity">
    <text evidence="1">Belongs to the cyanase family.</text>
</comment>
<evidence type="ECO:0000255" key="1">
    <source>
        <dbReference type="HAMAP-Rule" id="MF_03139"/>
    </source>
</evidence>
<protein>
    <recommendedName>
        <fullName evidence="1">Cyanate hydratase</fullName>
        <shortName evidence="1">Cyanase</shortName>
        <ecNumber evidence="1">4.2.1.104</ecNumber>
    </recommendedName>
    <alternativeName>
        <fullName evidence="1">Cyanate hydrolase</fullName>
    </alternativeName>
    <alternativeName>
        <fullName evidence="1">Cyanate lyase</fullName>
    </alternativeName>
</protein>
<sequence length="152" mass="16957">MANLATLDHPYLPQSASLLFDAKAKANLTFEDIARHIGRNEVATAAIFYGQAKASKEDVVKLAELLRLPAQALEMQMGGFPDRGRSVDMPPREPLIYRLYEIVQNYGYAYKAVLNEKFGDGIMSAISFSTNVEKETDDDGNNWAVITLRGKW</sequence>
<proteinExistence type="inferred from homology"/>
<reference key="1">
    <citation type="journal article" date="2009" name="Genome Res.">
        <title>Comparative genomic analyses of the human fungal pathogens Coccidioides and their relatives.</title>
        <authorList>
            <person name="Sharpton T.J."/>
            <person name="Stajich J.E."/>
            <person name="Rounsley S.D."/>
            <person name="Gardner M.J."/>
            <person name="Wortman J.R."/>
            <person name="Jordar V.S."/>
            <person name="Maiti R."/>
            <person name="Kodira C.D."/>
            <person name="Neafsey D.E."/>
            <person name="Zeng Q."/>
            <person name="Hung C.-Y."/>
            <person name="McMahan C."/>
            <person name="Muszewska A."/>
            <person name="Grynberg M."/>
            <person name="Mandel M.A."/>
            <person name="Kellner E.M."/>
            <person name="Barker B.M."/>
            <person name="Galgiani J.N."/>
            <person name="Orbach M.J."/>
            <person name="Kirkland T.N."/>
            <person name="Cole G.T."/>
            <person name="Henn M.R."/>
            <person name="Birren B.W."/>
            <person name="Taylor J.W."/>
        </authorList>
    </citation>
    <scope>NUCLEOTIDE SEQUENCE [LARGE SCALE GENOMIC DNA]</scope>
    <source>
        <strain>UAMH 1704</strain>
    </source>
</reference>
<dbReference type="EC" id="4.2.1.104" evidence="1"/>
<dbReference type="EMBL" id="CH476617">
    <property type="protein sequence ID" value="EEP79997.1"/>
    <property type="molecule type" value="Genomic_DNA"/>
</dbReference>
<dbReference type="RefSeq" id="XP_002584150.1">
    <property type="nucleotide sequence ID" value="XM_002584104.1"/>
</dbReference>
<dbReference type="SMR" id="C4JUN6"/>
<dbReference type="STRING" id="336963.C4JUN6"/>
<dbReference type="GeneID" id="8441150"/>
<dbReference type="KEGG" id="ure:UREG_04839"/>
<dbReference type="VEuPathDB" id="FungiDB:UREG_04839"/>
<dbReference type="eggNOG" id="ENOG502S3YJ">
    <property type="taxonomic scope" value="Eukaryota"/>
</dbReference>
<dbReference type="HOGENOM" id="CLU_103452_0_0_1"/>
<dbReference type="InParanoid" id="C4JUN6"/>
<dbReference type="OMA" id="YELVMIN"/>
<dbReference type="OrthoDB" id="10019422at2759"/>
<dbReference type="Proteomes" id="UP000002058">
    <property type="component" value="Unassembled WGS sequence"/>
</dbReference>
<dbReference type="GO" id="GO:0008824">
    <property type="term" value="F:cyanate hydratase activity"/>
    <property type="evidence" value="ECO:0007669"/>
    <property type="project" value="UniProtKB-UniRule"/>
</dbReference>
<dbReference type="GO" id="GO:0003677">
    <property type="term" value="F:DNA binding"/>
    <property type="evidence" value="ECO:0007669"/>
    <property type="project" value="InterPro"/>
</dbReference>
<dbReference type="GO" id="GO:0009439">
    <property type="term" value="P:cyanate metabolic process"/>
    <property type="evidence" value="ECO:0007669"/>
    <property type="project" value="UniProtKB-UniRule"/>
</dbReference>
<dbReference type="CDD" id="cd00559">
    <property type="entry name" value="Cyanase_C"/>
    <property type="match status" value="1"/>
</dbReference>
<dbReference type="Gene3D" id="3.30.1160.10">
    <property type="entry name" value="Cyanate lyase, C-terminal domain"/>
    <property type="match status" value="1"/>
</dbReference>
<dbReference type="Gene3D" id="1.10.260.40">
    <property type="entry name" value="lambda repressor-like DNA-binding domains"/>
    <property type="match status" value="1"/>
</dbReference>
<dbReference type="HAMAP" id="MF_00535">
    <property type="entry name" value="Cyanate_hydrat"/>
    <property type="match status" value="1"/>
</dbReference>
<dbReference type="InterPro" id="IPR008076">
    <property type="entry name" value="Cyanase"/>
</dbReference>
<dbReference type="InterPro" id="IPR003712">
    <property type="entry name" value="Cyanate_lyase_C"/>
</dbReference>
<dbReference type="InterPro" id="IPR036581">
    <property type="entry name" value="Cyanate_lyase_C_sf"/>
</dbReference>
<dbReference type="InterPro" id="IPR010982">
    <property type="entry name" value="Lambda_DNA-bd_dom_sf"/>
</dbReference>
<dbReference type="NCBIfam" id="TIGR00673">
    <property type="entry name" value="cynS"/>
    <property type="match status" value="1"/>
</dbReference>
<dbReference type="PANTHER" id="PTHR34186">
    <property type="entry name" value="CYANATE HYDRATASE"/>
    <property type="match status" value="1"/>
</dbReference>
<dbReference type="PANTHER" id="PTHR34186:SF2">
    <property type="entry name" value="CYANATE HYDRATASE"/>
    <property type="match status" value="1"/>
</dbReference>
<dbReference type="Pfam" id="PF02560">
    <property type="entry name" value="Cyanate_lyase"/>
    <property type="match status" value="1"/>
</dbReference>
<dbReference type="PIRSF" id="PIRSF001263">
    <property type="entry name" value="Cyanate_hydratas"/>
    <property type="match status" value="1"/>
</dbReference>
<dbReference type="PRINTS" id="PR01693">
    <property type="entry name" value="CYANASE"/>
</dbReference>
<dbReference type="SMART" id="SM01116">
    <property type="entry name" value="Cyanate_lyase"/>
    <property type="match status" value="1"/>
</dbReference>
<dbReference type="SUPFAM" id="SSF55234">
    <property type="entry name" value="Cyanase C-terminal domain"/>
    <property type="match status" value="1"/>
</dbReference>
<dbReference type="SUPFAM" id="SSF47413">
    <property type="entry name" value="lambda repressor-like DNA-binding domains"/>
    <property type="match status" value="1"/>
</dbReference>
<gene>
    <name evidence="1" type="primary">CYN1</name>
    <name type="ORF">UREG_04839</name>
</gene>
<name>CYNS_UNCRE</name>
<accession>C4JUN6</accession>
<feature type="chain" id="PRO_0000403269" description="Cyanate hydratase">
    <location>
        <begin position="1"/>
        <end position="152"/>
    </location>
</feature>
<feature type="active site" evidence="1">
    <location>
        <position position="98"/>
    </location>
</feature>
<feature type="active site" evidence="1">
    <location>
        <position position="101"/>
    </location>
</feature>
<feature type="active site" evidence="1">
    <location>
        <position position="124"/>
    </location>
</feature>